<comment type="function">
    <text evidence="3 4 5">Required for heat stress-instigated phosphorylation of BCY1 which is involved in cell wall integrity signaling. Regulates activity of MSN2, a transcription factor that binds to the stress-response element (STRE). Probably promotes formation of a complex between MSN2 and DNA. Regulates the stability of ROG1.</text>
</comment>
<comment type="catalytic activity">
    <reaction>
        <text>L-seryl-[protein] + ATP = O-phospho-L-seryl-[protein] + ADP + H(+)</text>
        <dbReference type="Rhea" id="RHEA:17989"/>
        <dbReference type="Rhea" id="RHEA-COMP:9863"/>
        <dbReference type="Rhea" id="RHEA-COMP:11604"/>
        <dbReference type="ChEBI" id="CHEBI:15378"/>
        <dbReference type="ChEBI" id="CHEBI:29999"/>
        <dbReference type="ChEBI" id="CHEBI:30616"/>
        <dbReference type="ChEBI" id="CHEBI:83421"/>
        <dbReference type="ChEBI" id="CHEBI:456216"/>
        <dbReference type="EC" id="2.7.11.1"/>
    </reaction>
</comment>
<comment type="catalytic activity">
    <reaction>
        <text>L-threonyl-[protein] + ATP = O-phospho-L-threonyl-[protein] + ADP + H(+)</text>
        <dbReference type="Rhea" id="RHEA:46608"/>
        <dbReference type="Rhea" id="RHEA-COMP:11060"/>
        <dbReference type="Rhea" id="RHEA-COMP:11605"/>
        <dbReference type="ChEBI" id="CHEBI:15378"/>
        <dbReference type="ChEBI" id="CHEBI:30013"/>
        <dbReference type="ChEBI" id="CHEBI:30616"/>
        <dbReference type="ChEBI" id="CHEBI:61977"/>
        <dbReference type="ChEBI" id="CHEBI:456216"/>
        <dbReference type="EC" id="2.7.11.1"/>
    </reaction>
</comment>
<comment type="similarity">
    <text evidence="1">Belongs to the protein kinase superfamily. Ser/Thr protein kinase family.</text>
</comment>
<reference key="1">
    <citation type="journal article" date="1996" name="Yeast">
        <title>Sequence analysis of a 13.4 kbp fragment from the left arm of chromosome XV reveals a malate dehydrogenase gene, a putative Ser/Thr protein kinase, the ribosomal L25 gene and four new open reading frames.</title>
        <authorList>
            <person name="Casamayor A."/>
            <person name="Khalid H."/>
            <person name="Balcells L."/>
            <person name="Aldea M."/>
            <person name="Casas C."/>
            <person name="Herrero E."/>
            <person name="Arino J."/>
        </authorList>
    </citation>
    <scope>NUCLEOTIDE SEQUENCE [GENOMIC DNA]</scope>
    <source>
        <strain>ATCC 96604 / S288c / FY1679</strain>
    </source>
</reference>
<reference key="2">
    <citation type="journal article" date="1997" name="Nature">
        <title>The nucleotide sequence of Saccharomyces cerevisiae chromosome XV.</title>
        <authorList>
            <person name="Dujon B."/>
            <person name="Albermann K."/>
            <person name="Aldea M."/>
            <person name="Alexandraki D."/>
            <person name="Ansorge W."/>
            <person name="Arino J."/>
            <person name="Benes V."/>
            <person name="Bohn C."/>
            <person name="Bolotin-Fukuhara M."/>
            <person name="Bordonne R."/>
            <person name="Boyer J."/>
            <person name="Camasses A."/>
            <person name="Casamayor A."/>
            <person name="Casas C."/>
            <person name="Cheret G."/>
            <person name="Cziepluch C."/>
            <person name="Daignan-Fornier B."/>
            <person name="Dang V.-D."/>
            <person name="de Haan M."/>
            <person name="Delius H."/>
            <person name="Durand P."/>
            <person name="Fairhead C."/>
            <person name="Feldmann H."/>
            <person name="Gaillon L."/>
            <person name="Galisson F."/>
            <person name="Gamo F.-J."/>
            <person name="Gancedo C."/>
            <person name="Goffeau A."/>
            <person name="Goulding S.E."/>
            <person name="Grivell L.A."/>
            <person name="Habbig B."/>
            <person name="Hand N.J."/>
            <person name="Hani J."/>
            <person name="Hattenhorst U."/>
            <person name="Hebling U."/>
            <person name="Hernando Y."/>
            <person name="Herrero E."/>
            <person name="Heumann K."/>
            <person name="Hiesel R."/>
            <person name="Hilger F."/>
            <person name="Hofmann B."/>
            <person name="Hollenberg C.P."/>
            <person name="Hughes B."/>
            <person name="Jauniaux J.-C."/>
            <person name="Kalogeropoulos A."/>
            <person name="Katsoulou C."/>
            <person name="Kordes E."/>
            <person name="Lafuente M.J."/>
            <person name="Landt O."/>
            <person name="Louis E.J."/>
            <person name="Maarse A.C."/>
            <person name="Madania A."/>
            <person name="Mannhaupt G."/>
            <person name="Marck C."/>
            <person name="Martin R.P."/>
            <person name="Mewes H.-W."/>
            <person name="Michaux G."/>
            <person name="Paces V."/>
            <person name="Parle-McDermott A.G."/>
            <person name="Pearson B.M."/>
            <person name="Perrin A."/>
            <person name="Pettersson B."/>
            <person name="Poch O."/>
            <person name="Pohl T.M."/>
            <person name="Poirey R."/>
            <person name="Portetelle D."/>
            <person name="Pujol A."/>
            <person name="Purnelle B."/>
            <person name="Ramezani Rad M."/>
            <person name="Rechmann S."/>
            <person name="Schwager C."/>
            <person name="Schweizer M."/>
            <person name="Sor F."/>
            <person name="Sterky F."/>
            <person name="Tarassov I.A."/>
            <person name="Teodoru C."/>
            <person name="Tettelin H."/>
            <person name="Thierry A."/>
            <person name="Tobiasch E."/>
            <person name="Tzermia M."/>
            <person name="Uhlen M."/>
            <person name="Unseld M."/>
            <person name="Valens M."/>
            <person name="Vandenbol M."/>
            <person name="Vetter I."/>
            <person name="Vlcek C."/>
            <person name="Voet M."/>
            <person name="Volckaert G."/>
            <person name="Voss H."/>
            <person name="Wambutt R."/>
            <person name="Wedler H."/>
            <person name="Wiemann S."/>
            <person name="Winsor B."/>
            <person name="Wolfe K.H."/>
            <person name="Zollner A."/>
            <person name="Zumstein E."/>
            <person name="Kleine K."/>
        </authorList>
    </citation>
    <scope>NUCLEOTIDE SEQUENCE [LARGE SCALE GENOMIC DNA]</scope>
    <source>
        <strain>ATCC 204508 / S288c</strain>
    </source>
</reference>
<reference key="3">
    <citation type="journal article" date="2014" name="G3 (Bethesda)">
        <title>The reference genome sequence of Saccharomyces cerevisiae: Then and now.</title>
        <authorList>
            <person name="Engel S.R."/>
            <person name="Dietrich F.S."/>
            <person name="Fisk D.G."/>
            <person name="Binkley G."/>
            <person name="Balakrishnan R."/>
            <person name="Costanzo M.C."/>
            <person name="Dwight S.S."/>
            <person name="Hitz B.C."/>
            <person name="Karra K."/>
            <person name="Nash R.S."/>
            <person name="Weng S."/>
            <person name="Wong E.D."/>
            <person name="Lloyd P."/>
            <person name="Skrzypek M.S."/>
            <person name="Miyasato S.R."/>
            <person name="Simison M."/>
            <person name="Cherry J.M."/>
        </authorList>
    </citation>
    <scope>GENOME REANNOTATION</scope>
    <source>
        <strain>ATCC 204508 / S288c</strain>
    </source>
</reference>
<reference key="4">
    <citation type="journal article" date="2000" name="Mol. Cell. Biol.">
        <title>Yeast glycogen synthase kinase 3 is involved in protein degradation in cooperation with Bul1, Bul2, and Rsp5.</title>
        <authorList>
            <person name="Andoh T."/>
            <person name="Hirata Y."/>
            <person name="Kikuchi A."/>
        </authorList>
    </citation>
    <scope>FUNCTION</scope>
</reference>
<reference key="5">
    <citation type="journal article" date="2003" name="J. Biol. Chem.">
        <title>Feedback inhibition on cell wall integrity signaling by Zds1 involves Gsk3 phosphorylation of a cAMP-dependent protein kinase regulatory subunit.</title>
        <authorList>
            <person name="Griffioen G."/>
            <person name="Swinnen S."/>
            <person name="Thevelein J.M."/>
        </authorList>
    </citation>
    <scope>FUNCTION</scope>
</reference>
<reference key="6">
    <citation type="journal article" date="2003" name="Mol. Biol. Cell">
        <title>Yeast glycogen synthase kinase-3 activates Msn2p-dependent transcription of stress responsive genes.</title>
        <authorList>
            <person name="Hirata Y."/>
            <person name="Andoh T."/>
            <person name="Asahara T."/>
            <person name="Kikuchi A."/>
        </authorList>
    </citation>
    <scope>FUNCTION</scope>
</reference>
<reference key="7">
    <citation type="journal article" date="2007" name="Proc. Natl. Acad. Sci. U.S.A.">
        <title>Analysis of phosphorylation sites on proteins from Saccharomyces cerevisiae by electron transfer dissociation (ETD) mass spectrometry.</title>
        <authorList>
            <person name="Chi A."/>
            <person name="Huttenhower C."/>
            <person name="Geer L.Y."/>
            <person name="Coon J.J."/>
            <person name="Syka J.E.P."/>
            <person name="Bai D.L."/>
            <person name="Shabanowitz J."/>
            <person name="Burke D.J."/>
            <person name="Troyanskaya O.G."/>
            <person name="Hunt D.F."/>
        </authorList>
    </citation>
    <scope>PHOSPHORYLATION [LARGE SCALE ANALYSIS] AT SER-211</scope>
    <scope>IDENTIFICATION BY MASS SPECTROMETRY [LARGE SCALE ANALYSIS]</scope>
</reference>
<protein>
    <recommendedName>
        <fullName>Glycogen synthase kinase-3 homolog YGK3</fullName>
        <ecNumber>2.7.11.1</ecNumber>
    </recommendedName>
</protein>
<feature type="chain" id="PRO_0000086159" description="Glycogen synthase kinase-3 homolog YGK3">
    <location>
        <begin position="1"/>
        <end position="375"/>
    </location>
</feature>
<feature type="domain" description="Protein kinase" evidence="1">
    <location>
        <begin position="41"/>
        <end position="329"/>
    </location>
</feature>
<feature type="active site" description="Proton acceptor" evidence="1 2">
    <location>
        <position position="173"/>
    </location>
</feature>
<feature type="binding site" evidence="1">
    <location>
        <begin position="47"/>
        <end position="55"/>
    </location>
    <ligand>
        <name>ATP</name>
        <dbReference type="ChEBI" id="CHEBI:30616"/>
    </ligand>
</feature>
<feature type="binding site" evidence="1">
    <location>
        <position position="74"/>
    </location>
    <ligand>
        <name>ATP</name>
        <dbReference type="ChEBI" id="CHEBI:30616"/>
    </ligand>
</feature>
<feature type="modified residue" description="Phosphoserine" evidence="6">
    <location>
        <position position="211"/>
    </location>
</feature>
<evidence type="ECO:0000255" key="1">
    <source>
        <dbReference type="PROSITE-ProRule" id="PRU00159"/>
    </source>
</evidence>
<evidence type="ECO:0000255" key="2">
    <source>
        <dbReference type="PROSITE-ProRule" id="PRU10027"/>
    </source>
</evidence>
<evidence type="ECO:0000269" key="3">
    <source>
    </source>
</evidence>
<evidence type="ECO:0000269" key="4">
    <source>
    </source>
</evidence>
<evidence type="ECO:0000269" key="5">
    <source>
    </source>
</evidence>
<evidence type="ECO:0007744" key="6">
    <source>
    </source>
</evidence>
<sequence>MLKVNNVFGSNPNRMTKLEDEHYFIDDIVSIKNRQKSKMYVREGKRIGHGSFGTVTQSILSSNSIEWLGPYAIKRVVKSPKVQSLELEILQNIRHPNLVTLEFFFESHCTTKDGGHLYQKNFVMEYIPQTLSSEIHEYFDNGSKMPTKHIKLYTFQILRALLTLHSMSICHGDLKPSNILIIPSSGIAKVCDFGSAQRLDDNTELKTYFCSRFYRAPELLLNSKDYTTQIDIWSLGCIIGEMIKGQPLFKGDSANSQLEEIAKLLGRFPKSSIKNSQELQDSLNDQKFKKFMHWFPSIEFFDVEFLLKVLTYDATERCDARQLMAHEFFDALRNETYFLPRGSSMPVHLPDLFNFSASEKRALGEYYNLIVPSLD</sequence>
<accession>Q12222</accession>
<accession>D6W1U0</accession>
<name>YGK3_YEAST</name>
<gene>
    <name type="primary">YGK3</name>
    <name type="ordered locus">YOL128C</name>
</gene>
<keyword id="KW-0067">ATP-binding</keyword>
<keyword id="KW-0418">Kinase</keyword>
<keyword id="KW-0547">Nucleotide-binding</keyword>
<keyword id="KW-0597">Phosphoprotein</keyword>
<keyword id="KW-1185">Reference proteome</keyword>
<keyword id="KW-0723">Serine/threonine-protein kinase</keyword>
<keyword id="KW-0804">Transcription</keyword>
<keyword id="KW-0805">Transcription regulation</keyword>
<keyword id="KW-0808">Transferase</keyword>
<dbReference type="EC" id="2.7.11.1"/>
<dbReference type="EMBL" id="U41293">
    <property type="protein sequence ID" value="AAC49464.1"/>
    <property type="molecule type" value="Genomic_DNA"/>
</dbReference>
<dbReference type="EMBL" id="Z74870">
    <property type="protein sequence ID" value="CAA99147.1"/>
    <property type="molecule type" value="Genomic_DNA"/>
</dbReference>
<dbReference type="EMBL" id="BK006948">
    <property type="protein sequence ID" value="DAA10656.1"/>
    <property type="molecule type" value="Genomic_DNA"/>
</dbReference>
<dbReference type="PIR" id="S63442">
    <property type="entry name" value="S63442"/>
</dbReference>
<dbReference type="RefSeq" id="NP_014513.1">
    <property type="nucleotide sequence ID" value="NM_001183382.1"/>
</dbReference>
<dbReference type="SMR" id="Q12222"/>
<dbReference type="BioGRID" id="34247">
    <property type="interactions" value="69"/>
</dbReference>
<dbReference type="DIP" id="DIP-4548N"/>
<dbReference type="FunCoup" id="Q12222">
    <property type="interactions" value="279"/>
</dbReference>
<dbReference type="IntAct" id="Q12222">
    <property type="interactions" value="15"/>
</dbReference>
<dbReference type="MINT" id="Q12222"/>
<dbReference type="STRING" id="4932.YOL128C"/>
<dbReference type="iPTMnet" id="Q12222"/>
<dbReference type="PaxDb" id="4932-YOL128C"/>
<dbReference type="PeptideAtlas" id="Q12222"/>
<dbReference type="EnsemblFungi" id="YOL128C_mRNA">
    <property type="protein sequence ID" value="YOL128C"/>
    <property type="gene ID" value="YOL128C"/>
</dbReference>
<dbReference type="GeneID" id="853992"/>
<dbReference type="KEGG" id="sce:YOL128C"/>
<dbReference type="AGR" id="SGD:S000005488"/>
<dbReference type="SGD" id="S000005488">
    <property type="gene designation" value="YGK3"/>
</dbReference>
<dbReference type="VEuPathDB" id="FungiDB:YOL128C"/>
<dbReference type="eggNOG" id="KOG0658">
    <property type="taxonomic scope" value="Eukaryota"/>
</dbReference>
<dbReference type="HOGENOM" id="CLU_000288_181_20_1"/>
<dbReference type="InParanoid" id="Q12222"/>
<dbReference type="OMA" id="FFESHCT"/>
<dbReference type="OrthoDB" id="272141at2759"/>
<dbReference type="BioCyc" id="YEAST:G3O-33523-MONOMER"/>
<dbReference type="BioGRID-ORCS" id="853992">
    <property type="hits" value="0 hits in 13 CRISPR screens"/>
</dbReference>
<dbReference type="PRO" id="PR:Q12222"/>
<dbReference type="Proteomes" id="UP000002311">
    <property type="component" value="Chromosome XV"/>
</dbReference>
<dbReference type="RNAct" id="Q12222">
    <property type="molecule type" value="protein"/>
</dbReference>
<dbReference type="GO" id="GO:0005634">
    <property type="term" value="C:nucleus"/>
    <property type="evidence" value="ECO:0000318"/>
    <property type="project" value="GO_Central"/>
</dbReference>
<dbReference type="GO" id="GO:0005524">
    <property type="term" value="F:ATP binding"/>
    <property type="evidence" value="ECO:0007669"/>
    <property type="project" value="UniProtKB-KW"/>
</dbReference>
<dbReference type="GO" id="GO:0004672">
    <property type="term" value="F:protein kinase activity"/>
    <property type="evidence" value="ECO:0007005"/>
    <property type="project" value="SGD"/>
</dbReference>
<dbReference type="GO" id="GO:0106310">
    <property type="term" value="F:protein serine kinase activity"/>
    <property type="evidence" value="ECO:0007669"/>
    <property type="project" value="RHEA"/>
</dbReference>
<dbReference type="GO" id="GO:0004674">
    <property type="term" value="F:protein serine/threonine kinase activity"/>
    <property type="evidence" value="ECO:0000315"/>
    <property type="project" value="SGD"/>
</dbReference>
<dbReference type="GO" id="GO:0006508">
    <property type="term" value="P:proteolysis"/>
    <property type="evidence" value="ECO:0000315"/>
    <property type="project" value="SGD"/>
</dbReference>
<dbReference type="CDD" id="cd14137">
    <property type="entry name" value="STKc_GSK3"/>
    <property type="match status" value="1"/>
</dbReference>
<dbReference type="FunFam" id="1.10.510.10:FF:000624">
    <property type="entry name" value="Mitogen-activated protein kinase"/>
    <property type="match status" value="1"/>
</dbReference>
<dbReference type="Gene3D" id="3.30.200.20">
    <property type="entry name" value="Phosphorylase Kinase, domain 1"/>
    <property type="match status" value="1"/>
</dbReference>
<dbReference type="Gene3D" id="1.10.510.10">
    <property type="entry name" value="Transferase(Phosphotransferase) domain 1"/>
    <property type="match status" value="1"/>
</dbReference>
<dbReference type="InterPro" id="IPR050591">
    <property type="entry name" value="GSK-3"/>
</dbReference>
<dbReference type="InterPro" id="IPR011009">
    <property type="entry name" value="Kinase-like_dom_sf"/>
</dbReference>
<dbReference type="InterPro" id="IPR000719">
    <property type="entry name" value="Prot_kinase_dom"/>
</dbReference>
<dbReference type="InterPro" id="IPR017441">
    <property type="entry name" value="Protein_kinase_ATP_BS"/>
</dbReference>
<dbReference type="InterPro" id="IPR008271">
    <property type="entry name" value="Ser/Thr_kinase_AS"/>
</dbReference>
<dbReference type="InterPro" id="IPR039192">
    <property type="entry name" value="STKc_GSK3"/>
</dbReference>
<dbReference type="PANTHER" id="PTHR24057">
    <property type="entry name" value="GLYCOGEN SYNTHASE KINASE-3 ALPHA"/>
    <property type="match status" value="1"/>
</dbReference>
<dbReference type="PANTHER" id="PTHR24057:SF4">
    <property type="entry name" value="PROTEIN KINASE MCK1"/>
    <property type="match status" value="1"/>
</dbReference>
<dbReference type="Pfam" id="PF00069">
    <property type="entry name" value="Pkinase"/>
    <property type="match status" value="1"/>
</dbReference>
<dbReference type="SMART" id="SM00220">
    <property type="entry name" value="S_TKc"/>
    <property type="match status" value="1"/>
</dbReference>
<dbReference type="SUPFAM" id="SSF56112">
    <property type="entry name" value="Protein kinase-like (PK-like)"/>
    <property type="match status" value="1"/>
</dbReference>
<dbReference type="PROSITE" id="PS00107">
    <property type="entry name" value="PROTEIN_KINASE_ATP"/>
    <property type="match status" value="1"/>
</dbReference>
<dbReference type="PROSITE" id="PS50011">
    <property type="entry name" value="PROTEIN_KINASE_DOM"/>
    <property type="match status" value="1"/>
</dbReference>
<dbReference type="PROSITE" id="PS00108">
    <property type="entry name" value="PROTEIN_KINASE_ST"/>
    <property type="match status" value="1"/>
</dbReference>
<proteinExistence type="evidence at protein level"/>
<organism>
    <name type="scientific">Saccharomyces cerevisiae (strain ATCC 204508 / S288c)</name>
    <name type="common">Baker's yeast</name>
    <dbReference type="NCBI Taxonomy" id="559292"/>
    <lineage>
        <taxon>Eukaryota</taxon>
        <taxon>Fungi</taxon>
        <taxon>Dikarya</taxon>
        <taxon>Ascomycota</taxon>
        <taxon>Saccharomycotina</taxon>
        <taxon>Saccharomycetes</taxon>
        <taxon>Saccharomycetales</taxon>
        <taxon>Saccharomycetaceae</taxon>
        <taxon>Saccharomyces</taxon>
    </lineage>
</organism>